<evidence type="ECO:0000250" key="1">
    <source>
        <dbReference type="UniProtKB" id="O62140"/>
    </source>
</evidence>
<evidence type="ECO:0000255" key="2"/>
<evidence type="ECO:0000255" key="3">
    <source>
        <dbReference type="PIRNR" id="PIRNR000168"/>
    </source>
</evidence>
<evidence type="ECO:0000255" key="4">
    <source>
        <dbReference type="PIRSR" id="PIRSR000168-1"/>
    </source>
</evidence>
<evidence type="ECO:0000255" key="5">
    <source>
        <dbReference type="PIRSR" id="PIRSR000168-2"/>
    </source>
</evidence>
<evidence type="ECO:0000269" key="6">
    <source>
    </source>
</evidence>
<evidence type="ECO:0000269" key="7">
    <source>
    </source>
</evidence>
<evidence type="ECO:0000269" key="8">
    <source>
    </source>
</evidence>
<evidence type="ECO:0000305" key="9"/>
<evidence type="ECO:0000305" key="10">
    <source>
    </source>
</evidence>
<evidence type="ECO:0000312" key="11">
    <source>
        <dbReference type="PDB" id="5K3J"/>
    </source>
</evidence>
<evidence type="ECO:0000312" key="12">
    <source>
        <dbReference type="Proteomes" id="UP000001940"/>
    </source>
</evidence>
<evidence type="ECO:0000312" key="13">
    <source>
        <dbReference type="WormBase" id="F08A8.2"/>
    </source>
</evidence>
<evidence type="ECO:0007744" key="14">
    <source>
        <dbReference type="PDB" id="5K3J"/>
    </source>
</evidence>
<evidence type="ECO:0007829" key="15">
    <source>
        <dbReference type="PDB" id="5K3J"/>
    </source>
</evidence>
<dbReference type="EC" id="1.3.3.-" evidence="6 7"/>
<dbReference type="EMBL" id="BX284601">
    <property type="protein sequence ID" value="CAB16864.2"/>
    <property type="molecule type" value="Genomic_DNA"/>
</dbReference>
<dbReference type="RefSeq" id="NP_493262.2">
    <property type="nucleotide sequence ID" value="NM_060861.6"/>
</dbReference>
<dbReference type="PDB" id="5K3J">
    <property type="method" value="X-ray"/>
    <property type="resolution" value="2.68 A"/>
    <property type="chains" value="A/B=1-661"/>
</dbReference>
<dbReference type="PDBsum" id="5K3J"/>
<dbReference type="SMR" id="O62137"/>
<dbReference type="FunCoup" id="O62137">
    <property type="interactions" value="1451"/>
</dbReference>
<dbReference type="STRING" id="6239.F08A8.2.1"/>
<dbReference type="PaxDb" id="6239-F08A8.2"/>
<dbReference type="PeptideAtlas" id="O62137"/>
<dbReference type="EnsemblMetazoa" id="F08A8.2.1">
    <property type="protein sequence ID" value="F08A8.2.1"/>
    <property type="gene ID" value="WBGene00008565"/>
</dbReference>
<dbReference type="GeneID" id="173163"/>
<dbReference type="KEGG" id="cel:CELE_F08A8.2"/>
<dbReference type="UCSC" id="F08A8.2">
    <property type="organism name" value="c. elegans"/>
</dbReference>
<dbReference type="AGR" id="WB:WBGene00008565"/>
<dbReference type="CTD" id="173163"/>
<dbReference type="WormBase" id="F08A8.2">
    <property type="protein sequence ID" value="CE43421"/>
    <property type="gene ID" value="WBGene00008565"/>
    <property type="gene designation" value="acox-1.2"/>
</dbReference>
<dbReference type="eggNOG" id="KOG0136">
    <property type="taxonomic scope" value="Eukaryota"/>
</dbReference>
<dbReference type="GeneTree" id="ENSGT00940000168827"/>
<dbReference type="HOGENOM" id="CLU_014629_3_1_1"/>
<dbReference type="InParanoid" id="O62137"/>
<dbReference type="OMA" id="ANLCNIY"/>
<dbReference type="OrthoDB" id="538336at2759"/>
<dbReference type="PhylomeDB" id="O62137"/>
<dbReference type="BRENDA" id="1.3.3.6">
    <property type="organism ID" value="1045"/>
</dbReference>
<dbReference type="Reactome" id="R-CEL-193368">
    <property type="pathway name" value="Synthesis of bile acids and bile salts via 7alpha-hydroxycholesterol"/>
</dbReference>
<dbReference type="Reactome" id="R-CEL-389887">
    <property type="pathway name" value="Beta-oxidation of pristanoyl-CoA"/>
</dbReference>
<dbReference type="Reactome" id="R-CEL-9033241">
    <property type="pathway name" value="Peroxisomal protein import"/>
</dbReference>
<dbReference type="UniPathway" id="UPA00661"/>
<dbReference type="PRO" id="PR:O62137"/>
<dbReference type="Proteomes" id="UP000001940">
    <property type="component" value="Chromosome I"/>
</dbReference>
<dbReference type="Bgee" id="WBGene00008565">
    <property type="expression patterns" value="Expressed in larva and 2 other cell types or tissues"/>
</dbReference>
<dbReference type="GO" id="GO:0005777">
    <property type="term" value="C:peroxisome"/>
    <property type="evidence" value="ECO:0000318"/>
    <property type="project" value="GO_Central"/>
</dbReference>
<dbReference type="GO" id="GO:0003997">
    <property type="term" value="F:acyl-CoA oxidase activity"/>
    <property type="evidence" value="ECO:0000314"/>
    <property type="project" value="UniProtKB"/>
</dbReference>
<dbReference type="GO" id="GO:0005524">
    <property type="term" value="F:ATP binding"/>
    <property type="evidence" value="ECO:0000314"/>
    <property type="project" value="UniProtKB"/>
</dbReference>
<dbReference type="GO" id="GO:0071949">
    <property type="term" value="F:FAD binding"/>
    <property type="evidence" value="ECO:0007669"/>
    <property type="project" value="InterPro"/>
</dbReference>
<dbReference type="GO" id="GO:0005504">
    <property type="term" value="F:fatty acid binding"/>
    <property type="evidence" value="ECO:0000318"/>
    <property type="project" value="GO_Central"/>
</dbReference>
<dbReference type="GO" id="GO:0050660">
    <property type="term" value="F:flavin adenine dinucleotide binding"/>
    <property type="evidence" value="ECO:0000318"/>
    <property type="project" value="GO_Central"/>
</dbReference>
<dbReference type="GO" id="GO:1904070">
    <property type="term" value="P:ascaroside biosynthetic process"/>
    <property type="evidence" value="ECO:0000314"/>
    <property type="project" value="UniProtKB"/>
</dbReference>
<dbReference type="GO" id="GO:0033540">
    <property type="term" value="P:fatty acid beta-oxidation using acyl-CoA oxidase"/>
    <property type="evidence" value="ECO:0000314"/>
    <property type="project" value="UniProtKB"/>
</dbReference>
<dbReference type="FunFam" id="1.10.540.10:FF:000006">
    <property type="entry name" value="Acyl-coenzyme A oxidase"/>
    <property type="match status" value="1"/>
</dbReference>
<dbReference type="FunFam" id="1.20.140.10:FF:000005">
    <property type="entry name" value="Acyl-coenzyme A oxidase"/>
    <property type="match status" value="1"/>
</dbReference>
<dbReference type="FunFam" id="1.20.140.10:FF:000013">
    <property type="entry name" value="Acyl-coenzyme A oxidase"/>
    <property type="match status" value="1"/>
</dbReference>
<dbReference type="FunFam" id="2.40.110.10:FF:000003">
    <property type="entry name" value="Acyl-coenzyme A oxidase"/>
    <property type="match status" value="1"/>
</dbReference>
<dbReference type="Gene3D" id="1.10.540.10">
    <property type="entry name" value="Acyl-CoA dehydrogenase/oxidase, N-terminal domain"/>
    <property type="match status" value="1"/>
</dbReference>
<dbReference type="Gene3D" id="2.40.110.10">
    <property type="entry name" value="Butyryl-CoA Dehydrogenase, subunit A, domain 2"/>
    <property type="match status" value="1"/>
</dbReference>
<dbReference type="Gene3D" id="1.20.140.10">
    <property type="entry name" value="Butyryl-CoA Dehydrogenase, subunit A, domain 3"/>
    <property type="match status" value="2"/>
</dbReference>
<dbReference type="InterPro" id="IPR055060">
    <property type="entry name" value="ACOX_C_alpha1"/>
</dbReference>
<dbReference type="InterPro" id="IPR029320">
    <property type="entry name" value="Acyl-CoA_ox_N"/>
</dbReference>
<dbReference type="InterPro" id="IPR046373">
    <property type="entry name" value="Acyl-CoA_Oxase/DH_mid-dom_sf"/>
</dbReference>
<dbReference type="InterPro" id="IPR012258">
    <property type="entry name" value="Acyl-CoA_oxidase"/>
</dbReference>
<dbReference type="InterPro" id="IPR002655">
    <property type="entry name" value="Acyl-CoA_oxidase_C"/>
</dbReference>
<dbReference type="InterPro" id="IPR036250">
    <property type="entry name" value="AcylCo_DH-like_C"/>
</dbReference>
<dbReference type="InterPro" id="IPR037069">
    <property type="entry name" value="AcylCoA_DH/ox_N_sf"/>
</dbReference>
<dbReference type="InterPro" id="IPR009100">
    <property type="entry name" value="AcylCoA_DH/oxidase_NM_dom_sf"/>
</dbReference>
<dbReference type="PANTHER" id="PTHR10909">
    <property type="entry name" value="ELECTRON TRANSPORT OXIDOREDUCTASE"/>
    <property type="match status" value="1"/>
</dbReference>
<dbReference type="PANTHER" id="PTHR10909:SF250">
    <property type="entry name" value="PEROXISOMAL ACYL-COENZYME A OXIDASE 1"/>
    <property type="match status" value="1"/>
</dbReference>
<dbReference type="Pfam" id="PF01756">
    <property type="entry name" value="ACOX"/>
    <property type="match status" value="1"/>
</dbReference>
<dbReference type="Pfam" id="PF22924">
    <property type="entry name" value="ACOX_C_alpha1"/>
    <property type="match status" value="1"/>
</dbReference>
<dbReference type="Pfam" id="PF14749">
    <property type="entry name" value="Acyl-CoA_ox_N"/>
    <property type="match status" value="1"/>
</dbReference>
<dbReference type="PIRSF" id="PIRSF000168">
    <property type="entry name" value="Acyl-CoA_oxidase"/>
    <property type="match status" value="1"/>
</dbReference>
<dbReference type="SUPFAM" id="SSF47203">
    <property type="entry name" value="Acyl-CoA dehydrogenase C-terminal domain-like"/>
    <property type="match status" value="2"/>
</dbReference>
<dbReference type="SUPFAM" id="SSF56645">
    <property type="entry name" value="Acyl-CoA dehydrogenase NM domain-like"/>
    <property type="match status" value="1"/>
</dbReference>
<comment type="function">
    <text evidence="6 7 8">Involved in the first step of peroxisomal beta-oxidation by catalyzing the desaturation of fatty acid-derived side chains of ascaroside pheromones, which regulates development and behavior (PubMed:25775534, PubMed:27551084). Specifically, shortens ascarosides with 5-carbon omega side chain (asc-omega-C5) (PubMed:25775534, PubMed:27551084). Does not shorten indol-3-carbonyl(IC)-ascaroside with 7-carbon or 9-carbon side chains (PubMed:29863473). Does not catalyze the desaturation of fatty acids or hydroxylated fatty acids (PubMed:25775534, PubMed:27551084).</text>
</comment>
<comment type="catalytic activity">
    <reaction evidence="6 7">
        <text>asc-omegaC5-CoA + O2 = asc-omegaDeltaC5-CoA + H2O2</text>
        <dbReference type="Rhea" id="RHEA:66212"/>
        <dbReference type="ChEBI" id="CHEBI:15379"/>
        <dbReference type="ChEBI" id="CHEBI:16240"/>
        <dbReference type="ChEBI" id="CHEBI:140060"/>
        <dbReference type="ChEBI" id="CHEBI:166969"/>
    </reaction>
</comment>
<comment type="cofactor">
    <cofactor evidence="7">
        <name>FAD</name>
        <dbReference type="ChEBI" id="CHEBI:57692"/>
    </cofactor>
</comment>
<comment type="activity regulation">
    <text evidence="7">Activated by ATP (PubMed:27551084). ATP binding leads to a conformational change that promotes FAD cofactor binding and enzyme activity (PubMed:27551084). ATP binding likely occurs during acox-1.2 folding and/or dimer formation (PubMed:27551084). The preference for processing substrates with shorter fatty acid chains is likely due to the closed conformation of the active site (PubMed:27551084).</text>
</comment>
<comment type="biophysicochemical properties">
    <kinetics>
        <KM evidence="6">175 uM for asc-omega-C5-CoA (at 30 degrees Celsius and pH 7.4)</KM>
        <KM evidence="6">152 uM for asc-omega-C5-CoA (at 30 degrees Celsius, pH 7.4 and in complex with acox-1.1)</KM>
        <text evidence="6">kcat is 364 sec(-1) with asc-omega-C5-CoA (at 30 degrees Celsius and pH 7.4) (PubMed:25775534). kcat is 478 sec(-1) with asc-omega-C5-CoA (at 30 degrees Celsius, pH 7.4 and in complex with acox-1.1) (PubMed:25775534).</text>
    </kinetics>
</comment>
<comment type="pathway">
    <text evidence="6 7">Lipid metabolism; peroxisomal fatty acid beta-oxidation.</text>
</comment>
<comment type="subunit">
    <text evidence="6 7 10">Homodimer (Probable) (PubMed:27551084). Forms a heterodimer with acox-1.1 (PubMed:25775534).</text>
</comment>
<comment type="subcellular location">
    <subcellularLocation>
        <location evidence="1">Peroxisome</location>
    </subcellularLocation>
</comment>
<comment type="induction">
    <text evidence="6">Induced by high temperatures (25 degrees Celsius) (PubMed:25775534). Down-regulated in dauer conditions (PubMed:25775534).</text>
</comment>
<comment type="similarity">
    <text evidence="3">Belongs to the acyl-CoA oxidase family.</text>
</comment>
<feature type="chain" id="PRO_0000452303" description="Acyl-coenzyme A oxidase acox-1.2">
    <location>
        <begin position="1"/>
        <end position="661"/>
    </location>
</feature>
<feature type="short sequence motif" description="Microbody targeting signal" evidence="2">
    <location>
        <begin position="659"/>
        <end position="661"/>
    </location>
</feature>
<feature type="active site" description="Proton acceptor" evidence="4">
    <location>
        <position position="432"/>
    </location>
</feature>
<feature type="binding site" description="in other chain" evidence="7 14">
    <location>
        <begin position="147"/>
        <end position="150"/>
    </location>
    <ligand>
        <name>FAD</name>
        <dbReference type="ChEBI" id="CHEBI:57692"/>
        <note>ligand shared between dimeric partners</note>
    </ligand>
</feature>
<feature type="binding site" description="in other chain" evidence="7 14">
    <location>
        <begin position="155"/>
        <end position="156"/>
    </location>
    <ligand>
        <name>FAD</name>
        <dbReference type="ChEBI" id="CHEBI:57692"/>
        <note>ligand shared between dimeric partners</note>
    </ligand>
</feature>
<feature type="binding site" description="in other chain" evidence="5 7 14">
    <location>
        <position position="189"/>
    </location>
    <ligand>
        <name>FAD</name>
        <dbReference type="ChEBI" id="CHEBI:57692"/>
        <note>ligand shared between dimeric partners</note>
    </ligand>
</feature>
<feature type="binding site" evidence="7 14">
    <location>
        <begin position="283"/>
        <end position="286"/>
    </location>
    <ligand>
        <name>substrate</name>
    </ligand>
</feature>
<feature type="binding site" evidence="7 14">
    <location>
        <position position="293"/>
    </location>
    <ligand>
        <name>substrate</name>
    </ligand>
</feature>
<feature type="binding site" evidence="7 14">
    <location>
        <position position="318"/>
    </location>
    <ligand>
        <name>FAD</name>
        <dbReference type="ChEBI" id="CHEBI:57692"/>
        <note>ligand shared between dimeric partners</note>
    </ligand>
</feature>
<feature type="binding site" evidence="7 14">
    <location>
        <begin position="338"/>
        <end position="341"/>
    </location>
    <ligand>
        <name>FAD</name>
        <dbReference type="ChEBI" id="CHEBI:57692"/>
        <note>ligand shared between dimeric partners</note>
    </ligand>
</feature>
<feature type="binding site" evidence="7 14">
    <location>
        <position position="340"/>
    </location>
    <ligand>
        <name>ATP</name>
        <dbReference type="ChEBI" id="CHEBI:30616"/>
        <note>ligand shared between dimeric partners</note>
    </ligand>
</feature>
<feature type="binding site" description="in other chain" evidence="1">
    <location>
        <position position="390"/>
    </location>
    <ligand>
        <name>ATP</name>
        <dbReference type="ChEBI" id="CHEBI:30616"/>
        <note>ligand shared between dimeric partners</note>
    </ligand>
</feature>
<feature type="binding site" description="in other chain" evidence="1">
    <location>
        <position position="394"/>
    </location>
    <ligand>
        <name>ATP</name>
        <dbReference type="ChEBI" id="CHEBI:30616"/>
        <note>ligand shared between dimeric partners</note>
    </ligand>
</feature>
<feature type="binding site" evidence="7 14">
    <location>
        <position position="402"/>
    </location>
    <ligand>
        <name>ATP</name>
        <dbReference type="ChEBI" id="CHEBI:30616"/>
        <note>ligand shared between dimeric partners</note>
    </ligand>
</feature>
<feature type="binding site" evidence="7 14">
    <location>
        <position position="409"/>
    </location>
    <ligand>
        <name>FAD</name>
        <dbReference type="ChEBI" id="CHEBI:57692"/>
        <note>ligand shared between dimeric partners</note>
    </ligand>
</feature>
<feature type="binding site" evidence="7 14">
    <location>
        <begin position="431"/>
        <end position="432"/>
    </location>
    <ligand>
        <name>substrate</name>
    </ligand>
</feature>
<feature type="binding site" description="in other chain" evidence="7 14">
    <location>
        <position position="434"/>
    </location>
    <ligand>
        <name>FAD</name>
        <dbReference type="ChEBI" id="CHEBI:57692"/>
        <note>ligand shared between dimeric partners</note>
    </ligand>
</feature>
<feature type="binding site" description="in other chain" evidence="7 14">
    <location>
        <begin position="525"/>
        <end position="528"/>
    </location>
    <ligand>
        <name>ATP</name>
        <dbReference type="ChEBI" id="CHEBI:30616"/>
        <note>ligand shared between dimeric partners</note>
    </ligand>
</feature>
<feature type="binding site" description="in other chain" evidence="7 14">
    <location>
        <position position="573"/>
    </location>
    <ligand>
        <name>ATP</name>
        <dbReference type="ChEBI" id="CHEBI:30616"/>
        <note>ligand shared between dimeric partners</note>
    </ligand>
</feature>
<feature type="site" description="Important for asc-omega-C5-CoA binding and thus substrate specificity" evidence="7 11">
    <location>
        <position position="299"/>
    </location>
</feature>
<feature type="mutagenesis site" description="Increases ATP and FAD binding." evidence="7">
    <original>E</original>
    <variation>A</variation>
    <location>
        <position position="432"/>
    </location>
</feature>
<feature type="mutagenesis site" description="In gk386052; increases production of asc-omega-C5 and reduces the production of asc-omega-C3." evidence="6">
    <location>
        <begin position="496"/>
        <end position="661"/>
    </location>
</feature>
<feature type="helix" evidence="15">
    <location>
        <begin position="12"/>
        <end position="18"/>
    </location>
</feature>
<feature type="helix" evidence="15">
    <location>
        <begin position="25"/>
        <end position="32"/>
    </location>
</feature>
<feature type="helix" evidence="15">
    <location>
        <begin position="36"/>
        <end position="49"/>
    </location>
</feature>
<feature type="helix" evidence="15">
    <location>
        <begin position="53"/>
        <end position="55"/>
    </location>
</feature>
<feature type="helix" evidence="15">
    <location>
        <begin position="61"/>
        <end position="63"/>
    </location>
</feature>
<feature type="helix" evidence="15">
    <location>
        <begin position="66"/>
        <end position="82"/>
    </location>
</feature>
<feature type="helix" evidence="15">
    <location>
        <begin position="84"/>
        <end position="87"/>
    </location>
</feature>
<feature type="helix" evidence="15">
    <location>
        <begin position="93"/>
        <end position="103"/>
    </location>
</feature>
<feature type="helix" evidence="15">
    <location>
        <begin position="112"/>
        <end position="116"/>
    </location>
</feature>
<feature type="helix" evidence="15">
    <location>
        <begin position="118"/>
        <end position="125"/>
    </location>
</feature>
<feature type="helix" evidence="15">
    <location>
        <begin position="128"/>
        <end position="133"/>
    </location>
</feature>
<feature type="helix" evidence="15">
    <location>
        <begin position="135"/>
        <end position="139"/>
    </location>
</feature>
<feature type="strand" evidence="15">
    <location>
        <begin position="151"/>
        <end position="153"/>
    </location>
</feature>
<feature type="helix" evidence="15">
    <location>
        <begin position="158"/>
        <end position="160"/>
    </location>
</feature>
<feature type="strand" evidence="15">
    <location>
        <begin position="164"/>
        <end position="168"/>
    </location>
</feature>
<feature type="turn" evidence="15">
    <location>
        <begin position="169"/>
        <end position="172"/>
    </location>
</feature>
<feature type="strand" evidence="15">
    <location>
        <begin position="173"/>
        <end position="177"/>
    </location>
</feature>
<feature type="strand" evidence="15">
    <location>
        <begin position="184"/>
        <end position="189"/>
    </location>
</feature>
<feature type="turn" evidence="15">
    <location>
        <begin position="190"/>
        <end position="194"/>
    </location>
</feature>
<feature type="strand" evidence="15">
    <location>
        <begin position="196"/>
        <end position="208"/>
    </location>
</feature>
<feature type="strand" evidence="15">
    <location>
        <begin position="210"/>
        <end position="219"/>
    </location>
</feature>
<feature type="turn" evidence="15">
    <location>
        <begin position="223"/>
        <end position="225"/>
    </location>
</feature>
<feature type="strand" evidence="15">
    <location>
        <begin position="232"/>
        <end position="236"/>
    </location>
</feature>
<feature type="strand" evidence="15">
    <location>
        <begin position="240"/>
        <end position="242"/>
    </location>
</feature>
<feature type="strand" evidence="15">
    <location>
        <begin position="248"/>
        <end position="259"/>
    </location>
</feature>
<feature type="helix" evidence="15">
    <location>
        <begin position="260"/>
        <end position="262"/>
    </location>
</feature>
<feature type="helix" evidence="15">
    <location>
        <begin position="284"/>
        <end position="286"/>
    </location>
</feature>
<feature type="helix" evidence="15">
    <location>
        <begin position="287"/>
        <end position="315"/>
    </location>
</feature>
<feature type="helix" evidence="15">
    <location>
        <begin position="332"/>
        <end position="334"/>
    </location>
</feature>
<feature type="helix" evidence="15">
    <location>
        <begin position="336"/>
        <end position="340"/>
    </location>
</feature>
<feature type="helix" evidence="15">
    <location>
        <begin position="343"/>
        <end position="363"/>
    </location>
</feature>
<feature type="turn" evidence="15">
    <location>
        <begin position="364"/>
        <end position="370"/>
    </location>
</feature>
<feature type="strand" evidence="15">
    <location>
        <begin position="371"/>
        <end position="373"/>
    </location>
</feature>
<feature type="helix" evidence="15">
    <location>
        <begin position="379"/>
        <end position="405"/>
    </location>
</feature>
<feature type="helix" evidence="15">
    <location>
        <begin position="406"/>
        <end position="412"/>
    </location>
</feature>
<feature type="turn" evidence="15">
    <location>
        <begin position="414"/>
        <end position="416"/>
    </location>
</feature>
<feature type="helix" evidence="15">
    <location>
        <begin position="418"/>
        <end position="426"/>
    </location>
</feature>
<feature type="helix" evidence="15">
    <location>
        <begin position="427"/>
        <end position="429"/>
    </location>
</feature>
<feature type="turn" evidence="15">
    <location>
        <begin position="430"/>
        <end position="432"/>
    </location>
</feature>
<feature type="helix" evidence="15">
    <location>
        <begin position="435"/>
        <end position="450"/>
    </location>
</feature>
<feature type="turn" evidence="15">
    <location>
        <begin position="451"/>
        <end position="456"/>
    </location>
</feature>
<feature type="helix" evidence="15">
    <location>
        <begin position="458"/>
        <end position="460"/>
    </location>
</feature>
<feature type="turn" evidence="15">
    <location>
        <begin position="463"/>
        <end position="465"/>
    </location>
</feature>
<feature type="helix" evidence="15">
    <location>
        <begin position="466"/>
        <end position="468"/>
    </location>
</feature>
<feature type="strand" evidence="15">
    <location>
        <begin position="478"/>
        <end position="480"/>
    </location>
</feature>
<feature type="helix" evidence="15">
    <location>
        <begin position="481"/>
        <end position="507"/>
    </location>
</feature>
<feature type="helix" evidence="15">
    <location>
        <begin position="512"/>
        <end position="518"/>
    </location>
</feature>
<feature type="helix" evidence="15">
    <location>
        <begin position="520"/>
        <end position="543"/>
    </location>
</feature>
<feature type="helix" evidence="15">
    <location>
        <begin position="549"/>
        <end position="569"/>
    </location>
</feature>
<feature type="helix" evidence="15">
    <location>
        <begin position="571"/>
        <end position="574"/>
    </location>
</feature>
<feature type="helix" evidence="15">
    <location>
        <begin position="581"/>
        <end position="597"/>
    </location>
</feature>
<feature type="helix" evidence="15">
    <location>
        <begin position="598"/>
        <end position="600"/>
    </location>
</feature>
<feature type="helix" evidence="15">
    <location>
        <begin position="601"/>
        <end position="606"/>
    </location>
</feature>
<feature type="helix" evidence="15">
    <location>
        <begin position="612"/>
        <end position="615"/>
    </location>
</feature>
<feature type="helix" evidence="15">
    <location>
        <begin position="626"/>
        <end position="636"/>
    </location>
</feature>
<feature type="helix" evidence="15">
    <location>
        <begin position="638"/>
        <end position="641"/>
    </location>
</feature>
<feature type="helix" evidence="15">
    <location>
        <begin position="646"/>
        <end position="650"/>
    </location>
</feature>
<feature type="helix" evidence="15">
    <location>
        <begin position="652"/>
        <end position="661"/>
    </location>
</feature>
<name>ACX12_CAEEL</name>
<reference evidence="12" key="1">
    <citation type="journal article" date="1998" name="Science">
        <title>Genome sequence of the nematode C. elegans: a platform for investigating biology.</title>
        <authorList>
            <consortium name="The C. elegans sequencing consortium"/>
        </authorList>
    </citation>
    <scope>NUCLEOTIDE SEQUENCE [LARGE SCALE GENOMIC DNA]</scope>
    <source>
        <strain evidence="12">Bristol N2</strain>
    </source>
</reference>
<reference evidence="9" key="2">
    <citation type="journal article" date="2015" name="Proc. Natl. Acad. Sci. U.S.A.">
        <title>Acyl-CoA oxidase complexes control the chemical message produced by Caenorhabditis elegans.</title>
        <authorList>
            <person name="Zhang X."/>
            <person name="Feng L."/>
            <person name="Chinta S."/>
            <person name="Singh P."/>
            <person name="Wang Y."/>
            <person name="Nunnery J.K."/>
            <person name="Butcher R.A."/>
        </authorList>
    </citation>
    <scope>FUNCTION</scope>
    <scope>CATALYTIC ACTIVITY</scope>
    <scope>BIOPHYSICOCHEMICAL PROPERTIES</scope>
    <scope>PATHWAY</scope>
    <scope>SUBUNIT</scope>
    <scope>INTERACTION WITH ACOX-1.1</scope>
    <scope>INDUCTION</scope>
    <scope>MUTAGENESIS OF 496-TRP--LEU-661</scope>
</reference>
<reference evidence="9" key="3">
    <citation type="journal article" date="2018" name="Elife">
        <title>Biosynthetic tailoring of existing ascaroside pheromones alters their biological function in C. elegans.</title>
        <authorList>
            <person name="Zhou Y."/>
            <person name="Wang Y."/>
            <person name="Zhang X."/>
            <person name="Bhar S."/>
            <person name="Jones Lipinski R.A."/>
            <person name="Han J."/>
            <person name="Feng L."/>
            <person name="Butcher R.A."/>
        </authorList>
    </citation>
    <scope>FUNCTION</scope>
</reference>
<reference evidence="14" key="4">
    <citation type="journal article" date="2016" name="Proc. Natl. Acad. Sci. U.S.A.">
        <title>Structural characterization of acyl-CoA oxidases reveals a direct link between pheromone biosynthesis and metabolic state in Caenorhabditis elegans.</title>
        <authorList>
            <person name="Zhang X."/>
            <person name="Li K."/>
            <person name="Jones R.A."/>
            <person name="Bruner S.D."/>
            <person name="Butcher R.A."/>
        </authorList>
    </citation>
    <scope>X-RAY CRYSTALLOGRAPHY (2.68 ANGSTROMS) OF MUTANT ALA-432 IN COMPLEX WITH ATP; FAD AND ASCAROSIDE-OMEGA-C5-COA</scope>
    <scope>FUNCTION</scope>
    <scope>CATALYTIC ACTIVITY</scope>
    <scope>COFACTOR</scope>
    <scope>ACTIVITY REGULATION</scope>
    <scope>PATHWAY</scope>
    <scope>SUBUNIT</scope>
    <scope>MUTAGENESIS OF GLU-432</scope>
</reference>
<gene>
    <name evidence="13" type="primary">acox-1.2</name>
    <name evidence="13" type="synonym">acox-2</name>
    <name evidence="13" type="ORF">F08A8.2</name>
</gene>
<protein>
    <recommendedName>
        <fullName evidence="9">Acyl-coenzyme A oxidase acox-1.2</fullName>
        <ecNumber evidence="6 7">1.3.3.-</ecNumber>
    </recommendedName>
</protein>
<accession>O62137</accession>
<proteinExistence type="evidence at protein level"/>
<sequence length="661" mass="75091">MANRSIRDGDNPELLEERRMATFDTDKMAAVIYGSEEFARRRREITDAVSKIPELADIKPYPFLTREEKVTEGTRKISILTKYLNQLIDRDNEEESLHLHREVIGYEGHPFALHDALFIPTLQSQASDEQQEKWLERARRREIIGCYAQTELGHGSNLRNLETTAVYDIASQEFVLHTPTTTALKWWPGALGKSCNYALVVAELIIKRNNYGPHFFMVQLRDEKTHIPLKGVTVGDIGPKMNFNAADNGYLGLNNLRVPRTNLLMRHCKVEADGTYVKPPHAKIGYSGMVKIRSQMAMEQGLFLAHALTIAARYSAVRRQGHLDDKQVEVKVLDYQTQQHRLFPSLARAYAFIFTGFETIHLYSQLLKDVDMGNTSGMADLHALTSGLKSVVAHETGEGIEQARMACGGHGYSMASYISVVYGIAIGGCTYEGENMVMLLQLARYLVKSVELIKAGKAKKLGPVASYLADKSDETDLTSLNGYVKMFENMARRQAWKATEKFLKLMESGESREVAWNKSAVELTRASRLHTRLFIIEAFMRRVSRIEDIPVKEVLTDLLHLHVNYELLDVATYALEFMSFTQLDYVRDQLYLYLEKIRPNAVSLVDSFQISDMQLRSVLGRRDGHVYENLFKWAKSSPLNNADVLPSVEKYLKPMMEKAKL</sequence>
<keyword id="KW-0002">3D-structure</keyword>
<keyword id="KW-0067">ATP-binding</keyword>
<keyword id="KW-0274">FAD</keyword>
<keyword id="KW-0276">Fatty acid metabolism</keyword>
<keyword id="KW-0285">Flavoprotein</keyword>
<keyword id="KW-0443">Lipid metabolism</keyword>
<keyword id="KW-0547">Nucleotide-binding</keyword>
<keyword id="KW-0560">Oxidoreductase</keyword>
<keyword id="KW-0576">Peroxisome</keyword>
<keyword id="KW-1185">Reference proteome</keyword>
<organism evidence="12">
    <name type="scientific">Caenorhabditis elegans</name>
    <dbReference type="NCBI Taxonomy" id="6239"/>
    <lineage>
        <taxon>Eukaryota</taxon>
        <taxon>Metazoa</taxon>
        <taxon>Ecdysozoa</taxon>
        <taxon>Nematoda</taxon>
        <taxon>Chromadorea</taxon>
        <taxon>Rhabditida</taxon>
        <taxon>Rhabditina</taxon>
        <taxon>Rhabditomorpha</taxon>
        <taxon>Rhabditoidea</taxon>
        <taxon>Rhabditidae</taxon>
        <taxon>Peloderinae</taxon>
        <taxon>Caenorhabditis</taxon>
    </lineage>
</organism>